<organism>
    <name type="scientific">Oryza sativa subsp. indica</name>
    <name type="common">Rice</name>
    <dbReference type="NCBI Taxonomy" id="39946"/>
    <lineage>
        <taxon>Eukaryota</taxon>
        <taxon>Viridiplantae</taxon>
        <taxon>Streptophyta</taxon>
        <taxon>Embryophyta</taxon>
        <taxon>Tracheophyta</taxon>
        <taxon>Spermatophyta</taxon>
        <taxon>Magnoliopsida</taxon>
        <taxon>Liliopsida</taxon>
        <taxon>Poales</taxon>
        <taxon>Poaceae</taxon>
        <taxon>BOP clade</taxon>
        <taxon>Oryzoideae</taxon>
        <taxon>Oryzeae</taxon>
        <taxon>Oryzinae</taxon>
        <taxon>Oryza</taxon>
        <taxon>Oryza sativa</taxon>
    </lineage>
</organism>
<protein>
    <recommendedName>
        <fullName evidence="5">Probable xyloglucan 6-xylosyltransferase 1</fullName>
        <ecNumber evidence="5">2.4.2.39</ecNumber>
    </recommendedName>
</protein>
<sequence length="448" mass="51646">MWVAERVVGERRMREIQRFARNAKLTVVCLLLTVVVLRGTVGAGKFGTPQQDLIELRHRFISHPHRALAEHHDALSRGGGSSSSSGRAAQRDDEPDPPPRTLRDPPYTLGPKISDWDEQRAAWHRRHPETPPFVNDVKPRVLLVTGSSPKPCENPVGDHYLLKSIKNKMDYCRVHGLEIFYNMALLDAEMAGFWAKLPLLRALLLAHPEIEFLWWMDSDAMFSDMAFELPWERYGPYNLIMHGWDEMVYDDKNWIGLNTGSFLLRNCQWSLDFLDTWAPMGPKGPVRIEAGKVLTKYLKDRPVFEADDQSAMVYILATEREKWGDKVYLENGYYLHGYWGILVDRYEEMLENYHPGLGDHRWPLVTHFVGCKPCGKFGDYPVERCLKQMERAFNFGDNQILQMYGFTHKSLGSRKVKRIRNETSNPLDVKDELGLLHPAFKAMKTTST</sequence>
<feature type="chain" id="PRO_0000434324" description="Probable xyloglucan 6-xylosyltransferase 1">
    <location>
        <begin position="1"/>
        <end position="448"/>
    </location>
</feature>
<feature type="topological domain" description="Cytoplasmic" evidence="5">
    <location>
        <begin position="1"/>
        <end position="19"/>
    </location>
</feature>
<feature type="transmembrane region" description="Helical; Signal-anchor for type II membrane protein" evidence="2">
    <location>
        <begin position="20"/>
        <end position="42"/>
    </location>
</feature>
<feature type="topological domain" description="Lumenal" evidence="5">
    <location>
        <begin position="43"/>
        <end position="448"/>
    </location>
</feature>
<feature type="region of interest" description="Disordered" evidence="4">
    <location>
        <begin position="71"/>
        <end position="113"/>
    </location>
</feature>
<feature type="glycosylation site" description="N-linked (GlcNAc...) asparagine" evidence="3">
    <location>
        <position position="421"/>
    </location>
</feature>
<comment type="function">
    <text evidence="1">Probable xyloglucan xylosyltransferase involved in the biosynthesis of xyloglucan in roots.</text>
</comment>
<comment type="catalytic activity">
    <reaction evidence="5">
        <text>Transfers an alpha-D-xylosyl residue from UDP-D-xylose to a glucose residue in xyloglucan, forming an alpha-(1-&gt;6)-D-xylosyl-D-glucose linkage.</text>
        <dbReference type="EC" id="2.4.2.39"/>
    </reaction>
</comment>
<comment type="subcellular location">
    <subcellularLocation>
        <location evidence="5">Golgi apparatus membrane</location>
        <topology evidence="5">Single-pass type II membrane protein</topology>
    </subcellularLocation>
</comment>
<comment type="similarity">
    <text evidence="5">Belongs to the glycosyltransferase 34 family.</text>
</comment>
<comment type="sequence caution" evidence="5">
    <conflict type="erroneous initiation">
        <sequence resource="EMBL-CDS" id="EAY89653"/>
    </conflict>
    <text>Truncated N-terminus.</text>
</comment>
<reference key="1">
    <citation type="journal article" date="2005" name="PLoS Biol.">
        <title>The genomes of Oryza sativa: a history of duplications.</title>
        <authorList>
            <person name="Yu J."/>
            <person name="Wang J."/>
            <person name="Lin W."/>
            <person name="Li S."/>
            <person name="Li H."/>
            <person name="Zhou J."/>
            <person name="Ni P."/>
            <person name="Dong W."/>
            <person name="Hu S."/>
            <person name="Zeng C."/>
            <person name="Zhang J."/>
            <person name="Zhang Y."/>
            <person name="Li R."/>
            <person name="Xu Z."/>
            <person name="Li S."/>
            <person name="Li X."/>
            <person name="Zheng H."/>
            <person name="Cong L."/>
            <person name="Lin L."/>
            <person name="Yin J."/>
            <person name="Geng J."/>
            <person name="Li G."/>
            <person name="Shi J."/>
            <person name="Liu J."/>
            <person name="Lv H."/>
            <person name="Li J."/>
            <person name="Wang J."/>
            <person name="Deng Y."/>
            <person name="Ran L."/>
            <person name="Shi X."/>
            <person name="Wang X."/>
            <person name="Wu Q."/>
            <person name="Li C."/>
            <person name="Ren X."/>
            <person name="Wang J."/>
            <person name="Wang X."/>
            <person name="Li D."/>
            <person name="Liu D."/>
            <person name="Zhang X."/>
            <person name="Ji Z."/>
            <person name="Zhao W."/>
            <person name="Sun Y."/>
            <person name="Zhang Z."/>
            <person name="Bao J."/>
            <person name="Han Y."/>
            <person name="Dong L."/>
            <person name="Ji J."/>
            <person name="Chen P."/>
            <person name="Wu S."/>
            <person name="Liu J."/>
            <person name="Xiao Y."/>
            <person name="Bu D."/>
            <person name="Tan J."/>
            <person name="Yang L."/>
            <person name="Ye C."/>
            <person name="Zhang J."/>
            <person name="Xu J."/>
            <person name="Zhou Y."/>
            <person name="Yu Y."/>
            <person name="Zhang B."/>
            <person name="Zhuang S."/>
            <person name="Wei H."/>
            <person name="Liu B."/>
            <person name="Lei M."/>
            <person name="Yu H."/>
            <person name="Li Y."/>
            <person name="Xu H."/>
            <person name="Wei S."/>
            <person name="He X."/>
            <person name="Fang L."/>
            <person name="Zhang Z."/>
            <person name="Zhang Y."/>
            <person name="Huang X."/>
            <person name="Su Z."/>
            <person name="Tong W."/>
            <person name="Li J."/>
            <person name="Tong Z."/>
            <person name="Li S."/>
            <person name="Ye J."/>
            <person name="Wang L."/>
            <person name="Fang L."/>
            <person name="Lei T."/>
            <person name="Chen C.-S."/>
            <person name="Chen H.-C."/>
            <person name="Xu Z."/>
            <person name="Li H."/>
            <person name="Huang H."/>
            <person name="Zhang F."/>
            <person name="Xu H."/>
            <person name="Li N."/>
            <person name="Zhao C."/>
            <person name="Li S."/>
            <person name="Dong L."/>
            <person name="Huang Y."/>
            <person name="Li L."/>
            <person name="Xi Y."/>
            <person name="Qi Q."/>
            <person name="Li W."/>
            <person name="Zhang B."/>
            <person name="Hu W."/>
            <person name="Zhang Y."/>
            <person name="Tian X."/>
            <person name="Jiao Y."/>
            <person name="Liang X."/>
            <person name="Jin J."/>
            <person name="Gao L."/>
            <person name="Zheng W."/>
            <person name="Hao B."/>
            <person name="Liu S.-M."/>
            <person name="Wang W."/>
            <person name="Yuan L."/>
            <person name="Cao M."/>
            <person name="McDermott J."/>
            <person name="Samudrala R."/>
            <person name="Wang J."/>
            <person name="Wong G.K.-S."/>
            <person name="Yang H."/>
        </authorList>
    </citation>
    <scope>NUCLEOTIDE SEQUENCE [LARGE SCALE GENOMIC DNA]</scope>
    <source>
        <strain>cv. 93-11</strain>
    </source>
</reference>
<accession>A2XFP3</accession>
<gene>
    <name evidence="5" type="primary">XXT1</name>
    <name evidence="6" type="ORF">OsI_11184</name>
</gene>
<dbReference type="EC" id="2.4.2.39" evidence="5"/>
<dbReference type="EMBL" id="CM000128">
    <property type="protein sequence ID" value="EAY89653.1"/>
    <property type="status" value="ALT_INIT"/>
    <property type="molecule type" value="Genomic_DNA"/>
</dbReference>
<dbReference type="SMR" id="A2XFP3"/>
<dbReference type="STRING" id="39946.A2XFP3"/>
<dbReference type="GlyCosmos" id="A2XFP3">
    <property type="glycosylation" value="1 site, No reported glycans"/>
</dbReference>
<dbReference type="EnsemblPlants" id="OsGoSa_03g0014400.01">
    <property type="protein sequence ID" value="OsGoSa_03g0014400.01"/>
    <property type="gene ID" value="OsGoSa_03g0014400"/>
</dbReference>
<dbReference type="EnsemblPlants" id="OsGoSa_03g0014400.02">
    <property type="protein sequence ID" value="OsGoSa_03g0014400.02"/>
    <property type="gene ID" value="OsGoSa_03g0014400"/>
</dbReference>
<dbReference type="EnsemblPlants" id="OsGoSa_03g0014400.03">
    <property type="protein sequence ID" value="OsGoSa_03g0014400.03"/>
    <property type="gene ID" value="OsGoSa_03g0014400"/>
</dbReference>
<dbReference type="EnsemblPlants" id="OsIR64_03g0014080.01">
    <property type="protein sequence ID" value="OsIR64_03g0014080.01"/>
    <property type="gene ID" value="OsIR64_03g0014080"/>
</dbReference>
<dbReference type="EnsemblPlants" id="OsIR64_03g0014080.02">
    <property type="protein sequence ID" value="OsIR64_03g0014080.02"/>
    <property type="gene ID" value="OsIR64_03g0014080"/>
</dbReference>
<dbReference type="EnsemblPlants" id="OsIR64_03g0014080.03">
    <property type="protein sequence ID" value="OsIR64_03g0014080.03"/>
    <property type="gene ID" value="OsIR64_03g0014080"/>
</dbReference>
<dbReference type="EnsemblPlants" id="OsKYG_03g0014320.01">
    <property type="protein sequence ID" value="OsKYG_03g0014320.01"/>
    <property type="gene ID" value="OsKYG_03g0014320"/>
</dbReference>
<dbReference type="EnsemblPlants" id="OsKYG_03g0014320.02">
    <property type="protein sequence ID" value="OsKYG_03g0014320.02"/>
    <property type="gene ID" value="OsKYG_03g0014320"/>
</dbReference>
<dbReference type="EnsemblPlants" id="OsLaMu_03g0014200.01">
    <property type="protein sequence ID" value="OsLaMu_03g0014200.01"/>
    <property type="gene ID" value="OsLaMu_03g0014200"/>
</dbReference>
<dbReference type="EnsemblPlants" id="OsLaMu_03g0014200.02">
    <property type="protein sequence ID" value="OsLaMu_03g0014200.02"/>
    <property type="gene ID" value="OsLaMu_03g0014200"/>
</dbReference>
<dbReference type="EnsemblPlants" id="OsLima_03g0014340.01">
    <property type="protein sequence ID" value="OsLima_03g0014340.01"/>
    <property type="gene ID" value="OsLima_03g0014340"/>
</dbReference>
<dbReference type="EnsemblPlants" id="OsLima_03g0014340.02">
    <property type="protein sequence ID" value="OsLima_03g0014340.02"/>
    <property type="gene ID" value="OsLima_03g0014340"/>
</dbReference>
<dbReference type="EnsemblPlants" id="OsLiXu_03g0014230.01">
    <property type="protein sequence ID" value="OsLiXu_03g0014230.01"/>
    <property type="gene ID" value="OsLiXu_03g0014230"/>
</dbReference>
<dbReference type="EnsemblPlants" id="OsLiXu_03g0014230.02">
    <property type="protein sequence ID" value="OsLiXu_03g0014230.02"/>
    <property type="gene ID" value="OsLiXu_03g0014230"/>
</dbReference>
<dbReference type="EnsemblPlants" id="OsLiXu_03g0014230.03">
    <property type="protein sequence ID" value="OsLiXu_03g0014230.03"/>
    <property type="gene ID" value="OsLiXu_03g0014230"/>
</dbReference>
<dbReference type="EnsemblPlants" id="OsMH63_03G014250_01">
    <property type="protein sequence ID" value="OsMH63_03G014250_01"/>
    <property type="gene ID" value="OsMH63_03G014250"/>
</dbReference>
<dbReference type="EnsemblPlants" id="OsMH63_03G014250_02">
    <property type="protein sequence ID" value="OsMH63_03G014250_02"/>
    <property type="gene ID" value="OsMH63_03G014250"/>
</dbReference>
<dbReference type="EnsemblPlants" id="OsMH63_03G014250_03">
    <property type="protein sequence ID" value="OsMH63_03G014250_03"/>
    <property type="gene ID" value="OsMH63_03G014250"/>
</dbReference>
<dbReference type="EnsemblPlants" id="OsPr106_03g0014180.01">
    <property type="protein sequence ID" value="OsPr106_03g0014180.01"/>
    <property type="gene ID" value="OsPr106_03g0014180"/>
</dbReference>
<dbReference type="EnsemblPlants" id="OsPr106_03g0014180.02">
    <property type="protein sequence ID" value="OsPr106_03g0014180.02"/>
    <property type="gene ID" value="OsPr106_03g0014180"/>
</dbReference>
<dbReference type="EnsemblPlants" id="OsPr106_03g0014180.03">
    <property type="protein sequence ID" value="OsPr106_03g0014180.03"/>
    <property type="gene ID" value="OsPr106_03g0014180"/>
</dbReference>
<dbReference type="EnsemblPlants" id="OsZS97_03G014190_01">
    <property type="protein sequence ID" value="OsZS97_03G014190_01"/>
    <property type="gene ID" value="OsZS97_03G014190"/>
</dbReference>
<dbReference type="EnsemblPlants" id="OsZS97_03G014190_02">
    <property type="protein sequence ID" value="OsZS97_03G014190_02"/>
    <property type="gene ID" value="OsZS97_03G014190"/>
</dbReference>
<dbReference type="Gramene" id="OsGoSa_03g0014400.01">
    <property type="protein sequence ID" value="OsGoSa_03g0014400.01"/>
    <property type="gene ID" value="OsGoSa_03g0014400"/>
</dbReference>
<dbReference type="Gramene" id="OsGoSa_03g0014400.02">
    <property type="protein sequence ID" value="OsGoSa_03g0014400.02"/>
    <property type="gene ID" value="OsGoSa_03g0014400"/>
</dbReference>
<dbReference type="Gramene" id="OsGoSa_03g0014400.03">
    <property type="protein sequence ID" value="OsGoSa_03g0014400.03"/>
    <property type="gene ID" value="OsGoSa_03g0014400"/>
</dbReference>
<dbReference type="Gramene" id="OsIR64_03g0014080.01">
    <property type="protein sequence ID" value="OsIR64_03g0014080.01"/>
    <property type="gene ID" value="OsIR64_03g0014080"/>
</dbReference>
<dbReference type="Gramene" id="OsIR64_03g0014080.02">
    <property type="protein sequence ID" value="OsIR64_03g0014080.02"/>
    <property type="gene ID" value="OsIR64_03g0014080"/>
</dbReference>
<dbReference type="Gramene" id="OsIR64_03g0014080.03">
    <property type="protein sequence ID" value="OsIR64_03g0014080.03"/>
    <property type="gene ID" value="OsIR64_03g0014080"/>
</dbReference>
<dbReference type="Gramene" id="OsKYG_03g0014320.01">
    <property type="protein sequence ID" value="OsKYG_03g0014320.01"/>
    <property type="gene ID" value="OsKYG_03g0014320"/>
</dbReference>
<dbReference type="Gramene" id="OsKYG_03g0014320.02">
    <property type="protein sequence ID" value="OsKYG_03g0014320.02"/>
    <property type="gene ID" value="OsKYG_03g0014320"/>
</dbReference>
<dbReference type="Gramene" id="OsLaMu_03g0014200.01">
    <property type="protein sequence ID" value="OsLaMu_03g0014200.01"/>
    <property type="gene ID" value="OsLaMu_03g0014200"/>
</dbReference>
<dbReference type="Gramene" id="OsLaMu_03g0014200.02">
    <property type="protein sequence ID" value="OsLaMu_03g0014200.02"/>
    <property type="gene ID" value="OsLaMu_03g0014200"/>
</dbReference>
<dbReference type="Gramene" id="OsLima_03g0014340.01">
    <property type="protein sequence ID" value="OsLima_03g0014340.01"/>
    <property type="gene ID" value="OsLima_03g0014340"/>
</dbReference>
<dbReference type="Gramene" id="OsLima_03g0014340.02">
    <property type="protein sequence ID" value="OsLima_03g0014340.02"/>
    <property type="gene ID" value="OsLima_03g0014340"/>
</dbReference>
<dbReference type="Gramene" id="OsLiXu_03g0014230.01">
    <property type="protein sequence ID" value="OsLiXu_03g0014230.01"/>
    <property type="gene ID" value="OsLiXu_03g0014230"/>
</dbReference>
<dbReference type="Gramene" id="OsLiXu_03g0014230.02">
    <property type="protein sequence ID" value="OsLiXu_03g0014230.02"/>
    <property type="gene ID" value="OsLiXu_03g0014230"/>
</dbReference>
<dbReference type="Gramene" id="OsLiXu_03g0014230.03">
    <property type="protein sequence ID" value="OsLiXu_03g0014230.03"/>
    <property type="gene ID" value="OsLiXu_03g0014230"/>
</dbReference>
<dbReference type="Gramene" id="OsMH63_03G014250_01">
    <property type="protein sequence ID" value="OsMH63_03G014250_01"/>
    <property type="gene ID" value="OsMH63_03G014250"/>
</dbReference>
<dbReference type="Gramene" id="OsMH63_03G014250_02">
    <property type="protein sequence ID" value="OsMH63_03G014250_02"/>
    <property type="gene ID" value="OsMH63_03G014250"/>
</dbReference>
<dbReference type="Gramene" id="OsMH63_03G014250_03">
    <property type="protein sequence ID" value="OsMH63_03G014250_03"/>
    <property type="gene ID" value="OsMH63_03G014250"/>
</dbReference>
<dbReference type="Gramene" id="OsPr106_03g0014180.01">
    <property type="protein sequence ID" value="OsPr106_03g0014180.01"/>
    <property type="gene ID" value="OsPr106_03g0014180"/>
</dbReference>
<dbReference type="Gramene" id="OsPr106_03g0014180.02">
    <property type="protein sequence ID" value="OsPr106_03g0014180.02"/>
    <property type="gene ID" value="OsPr106_03g0014180"/>
</dbReference>
<dbReference type="Gramene" id="OsPr106_03g0014180.03">
    <property type="protein sequence ID" value="OsPr106_03g0014180.03"/>
    <property type="gene ID" value="OsPr106_03g0014180"/>
</dbReference>
<dbReference type="Gramene" id="OsZS97_03G014190_01">
    <property type="protein sequence ID" value="OsZS97_03G014190_01"/>
    <property type="gene ID" value="OsZS97_03G014190"/>
</dbReference>
<dbReference type="Gramene" id="OsZS97_03G014190_02">
    <property type="protein sequence ID" value="OsZS97_03G014190_02"/>
    <property type="gene ID" value="OsZS97_03G014190"/>
</dbReference>
<dbReference type="HOGENOM" id="CLU_034328_1_1_1"/>
<dbReference type="OrthoDB" id="205108at2759"/>
<dbReference type="Proteomes" id="UP000007015">
    <property type="component" value="Chromosome 3"/>
</dbReference>
<dbReference type="GO" id="GO:0005768">
    <property type="term" value="C:endosome"/>
    <property type="evidence" value="ECO:0007669"/>
    <property type="project" value="TreeGrafter"/>
</dbReference>
<dbReference type="GO" id="GO:0000139">
    <property type="term" value="C:Golgi membrane"/>
    <property type="evidence" value="ECO:0007669"/>
    <property type="project" value="UniProtKB-SubCell"/>
</dbReference>
<dbReference type="GO" id="GO:0005802">
    <property type="term" value="C:trans-Golgi network"/>
    <property type="evidence" value="ECO:0007669"/>
    <property type="project" value="TreeGrafter"/>
</dbReference>
<dbReference type="GO" id="GO:0016758">
    <property type="term" value="F:hexosyltransferase activity"/>
    <property type="evidence" value="ECO:0007669"/>
    <property type="project" value="TreeGrafter"/>
</dbReference>
<dbReference type="GO" id="GO:0035252">
    <property type="term" value="F:UDP-xylosyltransferase activity"/>
    <property type="evidence" value="ECO:0007669"/>
    <property type="project" value="TreeGrafter"/>
</dbReference>
<dbReference type="GO" id="GO:0033843">
    <property type="term" value="F:xyloglucan 6-xylosyltransferase activity"/>
    <property type="evidence" value="ECO:0007669"/>
    <property type="project" value="UniProtKB-EC"/>
</dbReference>
<dbReference type="GO" id="GO:0009969">
    <property type="term" value="P:xyloglucan biosynthetic process"/>
    <property type="evidence" value="ECO:0007669"/>
    <property type="project" value="TreeGrafter"/>
</dbReference>
<dbReference type="FunFam" id="3.90.550.10:FF:000032">
    <property type="entry name" value="xyloglucan 6-xylosyltransferase 2"/>
    <property type="match status" value="1"/>
</dbReference>
<dbReference type="Gene3D" id="3.90.550.10">
    <property type="entry name" value="Spore Coat Polysaccharide Biosynthesis Protein SpsA, Chain A"/>
    <property type="match status" value="1"/>
</dbReference>
<dbReference type="InterPro" id="IPR008630">
    <property type="entry name" value="Glyco_trans_34"/>
</dbReference>
<dbReference type="InterPro" id="IPR029044">
    <property type="entry name" value="Nucleotide-diphossugar_trans"/>
</dbReference>
<dbReference type="PANTHER" id="PTHR31311:SF5">
    <property type="entry name" value="XYLOGLUCAN 6-XYLOSYLTRANSFERASE 2"/>
    <property type="match status" value="1"/>
</dbReference>
<dbReference type="PANTHER" id="PTHR31311">
    <property type="entry name" value="XYLOGLUCAN 6-XYLOSYLTRANSFERASE 5-RELATED-RELATED"/>
    <property type="match status" value="1"/>
</dbReference>
<dbReference type="Pfam" id="PF05637">
    <property type="entry name" value="Glyco_transf_34"/>
    <property type="match status" value="1"/>
</dbReference>
<name>XXT1_ORYSI</name>
<evidence type="ECO:0000250" key="1">
    <source>
        <dbReference type="UniProtKB" id="Q10MQ0"/>
    </source>
</evidence>
<evidence type="ECO:0000255" key="2"/>
<evidence type="ECO:0000255" key="3">
    <source>
        <dbReference type="PROSITE-ProRule" id="PRU00498"/>
    </source>
</evidence>
<evidence type="ECO:0000256" key="4">
    <source>
        <dbReference type="SAM" id="MobiDB-lite"/>
    </source>
</evidence>
<evidence type="ECO:0000305" key="5"/>
<evidence type="ECO:0000312" key="6">
    <source>
        <dbReference type="EMBL" id="EAY89653.1"/>
    </source>
</evidence>
<keyword id="KW-0325">Glycoprotein</keyword>
<keyword id="KW-0328">Glycosyltransferase</keyword>
<keyword id="KW-0333">Golgi apparatus</keyword>
<keyword id="KW-0472">Membrane</keyword>
<keyword id="KW-1185">Reference proteome</keyword>
<keyword id="KW-0735">Signal-anchor</keyword>
<keyword id="KW-0808">Transferase</keyword>
<keyword id="KW-0812">Transmembrane</keyword>
<keyword id="KW-1133">Transmembrane helix</keyword>
<proteinExistence type="inferred from homology"/>